<feature type="chain" id="PRO_0000098284" description="DNA translocase FtsK">
    <location>
        <begin position="1"/>
        <end position="887"/>
    </location>
</feature>
<feature type="transmembrane region" description="Helical" evidence="2">
    <location>
        <begin position="30"/>
        <end position="50"/>
    </location>
</feature>
<feature type="transmembrane region" description="Helical" evidence="2">
    <location>
        <begin position="81"/>
        <end position="101"/>
    </location>
</feature>
<feature type="transmembrane region" description="Helical" evidence="2">
    <location>
        <begin position="113"/>
        <end position="133"/>
    </location>
</feature>
<feature type="transmembrane region" description="Helical" evidence="2">
    <location>
        <begin position="141"/>
        <end position="161"/>
    </location>
</feature>
<feature type="transmembrane region" description="Helical" evidence="2">
    <location>
        <begin position="164"/>
        <end position="184"/>
    </location>
</feature>
<feature type="topological domain" description="Cytoplasmic" evidence="2">
    <location>
        <begin position="185"/>
        <end position="887"/>
    </location>
</feature>
<feature type="domain" description="FtsK" evidence="3">
    <location>
        <begin position="515"/>
        <end position="734"/>
    </location>
</feature>
<feature type="region of interest" description="Disordered" evidence="4">
    <location>
        <begin position="794"/>
        <end position="823"/>
    </location>
</feature>
<feature type="compositionally biased region" description="Gly residues" evidence="4">
    <location>
        <begin position="806"/>
        <end position="817"/>
    </location>
</feature>
<feature type="binding site" evidence="3">
    <location>
        <begin position="535"/>
        <end position="540"/>
    </location>
    <ligand>
        <name>ATP</name>
        <dbReference type="ChEBI" id="CHEBI:30616"/>
    </ligand>
</feature>
<dbReference type="EMBL" id="BA000012">
    <property type="protein sequence ID" value="BAB50946.1"/>
    <property type="molecule type" value="Genomic_DNA"/>
</dbReference>
<dbReference type="RefSeq" id="WP_010912288.1">
    <property type="nucleotide sequence ID" value="NC_002678.2"/>
</dbReference>
<dbReference type="SMR" id="Q98EH3"/>
<dbReference type="KEGG" id="mlo:mll4243"/>
<dbReference type="PATRIC" id="fig|266835.9.peg.3348"/>
<dbReference type="eggNOG" id="COG1674">
    <property type="taxonomic scope" value="Bacteria"/>
</dbReference>
<dbReference type="eggNOG" id="COG2261">
    <property type="taxonomic scope" value="Bacteria"/>
</dbReference>
<dbReference type="HOGENOM" id="CLU_001981_6_1_5"/>
<dbReference type="Proteomes" id="UP000000552">
    <property type="component" value="Chromosome"/>
</dbReference>
<dbReference type="GO" id="GO:0005886">
    <property type="term" value="C:plasma membrane"/>
    <property type="evidence" value="ECO:0007669"/>
    <property type="project" value="UniProtKB-SubCell"/>
</dbReference>
<dbReference type="GO" id="GO:0005524">
    <property type="term" value="F:ATP binding"/>
    <property type="evidence" value="ECO:0007669"/>
    <property type="project" value="UniProtKB-KW"/>
</dbReference>
<dbReference type="GO" id="GO:0016887">
    <property type="term" value="F:ATP hydrolysis activity"/>
    <property type="evidence" value="ECO:0007669"/>
    <property type="project" value="InterPro"/>
</dbReference>
<dbReference type="GO" id="GO:0003677">
    <property type="term" value="F:DNA binding"/>
    <property type="evidence" value="ECO:0007669"/>
    <property type="project" value="UniProtKB-KW"/>
</dbReference>
<dbReference type="GO" id="GO:0051301">
    <property type="term" value="P:cell division"/>
    <property type="evidence" value="ECO:0007669"/>
    <property type="project" value="UniProtKB-KW"/>
</dbReference>
<dbReference type="GO" id="GO:0007059">
    <property type="term" value="P:chromosome segregation"/>
    <property type="evidence" value="ECO:0007669"/>
    <property type="project" value="UniProtKB-KW"/>
</dbReference>
<dbReference type="CDD" id="cd01127">
    <property type="entry name" value="TrwB_TraG_TraD_VirD4"/>
    <property type="match status" value="1"/>
</dbReference>
<dbReference type="Gene3D" id="3.30.980.40">
    <property type="match status" value="1"/>
</dbReference>
<dbReference type="Gene3D" id="3.40.50.300">
    <property type="entry name" value="P-loop containing nucleotide triphosphate hydrolases"/>
    <property type="match status" value="1"/>
</dbReference>
<dbReference type="Gene3D" id="1.10.10.10">
    <property type="entry name" value="Winged helix-like DNA-binding domain superfamily/Winged helix DNA-binding domain"/>
    <property type="match status" value="1"/>
</dbReference>
<dbReference type="InterPro" id="IPR003593">
    <property type="entry name" value="AAA+_ATPase"/>
</dbReference>
<dbReference type="InterPro" id="IPR050206">
    <property type="entry name" value="FtsK/SpoIIIE/SftA"/>
</dbReference>
<dbReference type="InterPro" id="IPR025199">
    <property type="entry name" value="FtsK_4TM"/>
</dbReference>
<dbReference type="InterPro" id="IPR041027">
    <property type="entry name" value="FtsK_alpha"/>
</dbReference>
<dbReference type="InterPro" id="IPR002543">
    <property type="entry name" value="FtsK_dom"/>
</dbReference>
<dbReference type="InterPro" id="IPR018541">
    <property type="entry name" value="Ftsk_gamma"/>
</dbReference>
<dbReference type="InterPro" id="IPR027417">
    <property type="entry name" value="P-loop_NTPase"/>
</dbReference>
<dbReference type="InterPro" id="IPR036388">
    <property type="entry name" value="WH-like_DNA-bd_sf"/>
</dbReference>
<dbReference type="InterPro" id="IPR036390">
    <property type="entry name" value="WH_DNA-bd_sf"/>
</dbReference>
<dbReference type="PANTHER" id="PTHR22683:SF41">
    <property type="entry name" value="DNA TRANSLOCASE FTSK"/>
    <property type="match status" value="1"/>
</dbReference>
<dbReference type="PANTHER" id="PTHR22683">
    <property type="entry name" value="SPORULATION PROTEIN RELATED"/>
    <property type="match status" value="1"/>
</dbReference>
<dbReference type="Pfam" id="PF13491">
    <property type="entry name" value="FtsK_4TM"/>
    <property type="match status" value="1"/>
</dbReference>
<dbReference type="Pfam" id="PF17854">
    <property type="entry name" value="FtsK_alpha"/>
    <property type="match status" value="1"/>
</dbReference>
<dbReference type="Pfam" id="PF09397">
    <property type="entry name" value="FtsK_gamma"/>
    <property type="match status" value="1"/>
</dbReference>
<dbReference type="Pfam" id="PF01580">
    <property type="entry name" value="FtsK_SpoIIIE"/>
    <property type="match status" value="1"/>
</dbReference>
<dbReference type="SMART" id="SM00382">
    <property type="entry name" value="AAA"/>
    <property type="match status" value="1"/>
</dbReference>
<dbReference type="SMART" id="SM00843">
    <property type="entry name" value="Ftsk_gamma"/>
    <property type="match status" value="1"/>
</dbReference>
<dbReference type="SUPFAM" id="SSF52540">
    <property type="entry name" value="P-loop containing nucleoside triphosphate hydrolases"/>
    <property type="match status" value="1"/>
</dbReference>
<dbReference type="SUPFAM" id="SSF46785">
    <property type="entry name" value="Winged helix' DNA-binding domain"/>
    <property type="match status" value="1"/>
</dbReference>
<dbReference type="PROSITE" id="PS50901">
    <property type="entry name" value="FTSK"/>
    <property type="match status" value="1"/>
</dbReference>
<proteinExistence type="inferred from homology"/>
<evidence type="ECO:0000250" key="1"/>
<evidence type="ECO:0000255" key="2"/>
<evidence type="ECO:0000255" key="3">
    <source>
        <dbReference type="PROSITE-ProRule" id="PRU00289"/>
    </source>
</evidence>
<evidence type="ECO:0000256" key="4">
    <source>
        <dbReference type="SAM" id="MobiDB-lite"/>
    </source>
</evidence>
<evidence type="ECO:0000305" key="5"/>
<accession>Q98EH3</accession>
<reference key="1">
    <citation type="journal article" date="2000" name="DNA Res.">
        <title>Complete genome structure of the nitrogen-fixing symbiotic bacterium Mesorhizobium loti.</title>
        <authorList>
            <person name="Kaneko T."/>
            <person name="Nakamura Y."/>
            <person name="Sato S."/>
            <person name="Asamizu E."/>
            <person name="Kato T."/>
            <person name="Sasamoto S."/>
            <person name="Watanabe A."/>
            <person name="Idesawa K."/>
            <person name="Ishikawa A."/>
            <person name="Kawashima K."/>
            <person name="Kimura T."/>
            <person name="Kishida Y."/>
            <person name="Kiyokawa C."/>
            <person name="Kohara M."/>
            <person name="Matsumoto M."/>
            <person name="Matsuno A."/>
            <person name="Mochizuki Y."/>
            <person name="Nakayama S."/>
            <person name="Nakazaki N."/>
            <person name="Shimpo S."/>
            <person name="Sugimoto M."/>
            <person name="Takeuchi C."/>
            <person name="Yamada M."/>
            <person name="Tabata S."/>
        </authorList>
    </citation>
    <scope>NUCLEOTIDE SEQUENCE [LARGE SCALE GENOMIC DNA]</scope>
    <source>
        <strain>LMG 29417 / CECT 9101 / MAFF 303099</strain>
    </source>
</reference>
<name>FTSK_RHILO</name>
<gene>
    <name type="primary">ftsK</name>
    <name type="ordered locus">mll4243</name>
</gene>
<organism>
    <name type="scientific">Mesorhizobium japonicum (strain LMG 29417 / CECT 9101 / MAFF 303099)</name>
    <name type="common">Mesorhizobium loti (strain MAFF 303099)</name>
    <dbReference type="NCBI Taxonomy" id="266835"/>
    <lineage>
        <taxon>Bacteria</taxon>
        <taxon>Pseudomonadati</taxon>
        <taxon>Pseudomonadota</taxon>
        <taxon>Alphaproteobacteria</taxon>
        <taxon>Hyphomicrobiales</taxon>
        <taxon>Phyllobacteriaceae</taxon>
        <taxon>Mesorhizobium</taxon>
    </lineage>
</organism>
<sequence length="887" mass="96130">MRSGASAPLAMTDTGHGIQAFARRQVGRLVGAGMFLAVAFGVASLATWNVADPSFSHATNNTVTNAMGYAGAVFSDLAMQFFGLAAVAALVPAVIWGYLLFSARGVDRLPKRGLFWFGFALLAAAIAGCIVPPKTWPLPTGLGGVFGDMVLKIPGVLIGGYPTGLIASVLAVLLAGPTLWLFAFGSALIGRKNGFAVMEEPAAADPREDDLLFDNEEDEGDEGILALGAITHWWLSLRAWMHRRAVRRRQERDEYEPEMEPRASAWRRAAERVESAEFAEQRMSPGGRARVEPEFFAAMVNDRSVSVDPDDDDIFDRDDEDMDFDDEPVAQRRAAPAAKVQQFRSDAATRVEAPAPRPAPGARVQREAQTSLIGSDKFEMPSLHFLSEPKNVARDPSLSKDALEQNARLLEGVLEDFGVKGEIIAVRPGPVVTLYELEPAPGIKSSRVIGLSDDIARSMSAIACRVAVVPGRNAIGIELPNAKRETVYLREIMASRDFETTKAKLALALGKTINGEAVIVDIAKMPHVLVAGTTGSGKSVAINTMILSLLYRLTPQECRLIMIDPKMLELSVYDGIPHLLTPVVTDPKKAVVALKWTVREMEDRYRKMSKVGVRNIDGFNARVQLAEKKGEKISRTVQTGFDRQTGEAIYETEDLDLEPMPYIVVIIDEMADLMMVAGKDIEGAVQRLAQMARAAGIHVIMATQRPSVDVITGTIKANFPTRISFQVTSKIDSRTILGEQGAEQLLGMGDMLYMAGGGRIQRVHGPFVSDDEVEKIVGHLKLQGVPEYLDAITEDDDEDDDEPSGKGAGSGGGGGGNFEDSDDPYDQAVAVVLRDGKASTSYIQRRLGIGYNRAASIIEKMEKEGIVGPANHAGKREILVPTEDDKF</sequence>
<keyword id="KW-0067">ATP-binding</keyword>
<keyword id="KW-0131">Cell cycle</keyword>
<keyword id="KW-0132">Cell division</keyword>
<keyword id="KW-0997">Cell inner membrane</keyword>
<keyword id="KW-1003">Cell membrane</keyword>
<keyword id="KW-0159">Chromosome partition</keyword>
<keyword id="KW-0238">DNA-binding</keyword>
<keyword id="KW-0472">Membrane</keyword>
<keyword id="KW-0547">Nucleotide-binding</keyword>
<keyword id="KW-0812">Transmembrane</keyword>
<keyword id="KW-1133">Transmembrane helix</keyword>
<protein>
    <recommendedName>
        <fullName>DNA translocase FtsK</fullName>
    </recommendedName>
</protein>
<comment type="function">
    <text evidence="1">Essential cell division protein that coordinates cell division and chromosome segregation. The N-terminus is involved in assembly of the cell-division machinery. The C-terminus functions as a DNA motor that moves dsDNA in an ATP-dependent manner towards the dif recombination site, which is located within the replication terminus region. Translocation stops specifically at Xer-dif sites, where FtsK interacts with the Xer recombinase, allowing activation of chromosome unlinking by recombination. FtsK orienting polar sequences (KOPS) guide the direction of DNA translocation. FtsK can remove proteins from DNA as it translocates, but translocation stops specifically at XerCD-dif site, thereby preventing removal of XerC and XerD from dif (By similarity).</text>
</comment>
<comment type="subunit">
    <text evidence="1">Homohexamer. Forms a ring that surrounds DNA (By similarity).</text>
</comment>
<comment type="subcellular location">
    <subcellularLocation>
        <location evidence="1">Cell inner membrane</location>
        <topology evidence="1">Multi-pass membrane protein</topology>
    </subcellularLocation>
    <text evidence="1">Located at the septum.</text>
</comment>
<comment type="domain">
    <text evidence="1">Consists of an N-terminal domain, which is sufficient for the localization to the septal ring and is required for cell division, followed by a linker domain, and a C-terminal domain, which forms the translocation motor involved in chromosome segregation. The C-terminal domain can be further subdivided into alpha, beta and gamma subdomains. The alpha and beta subdomains multimerise to produce a hexameric ring, contain the nucleotide binding motif and form the DNA pump. The gamma subdomain is a regulatory subdomain that controls translocation of DNA by recognition of KOPS motifs and interacts with XerD recombinase (By similarity).</text>
</comment>
<comment type="similarity">
    <text evidence="5">Belongs to the FtsK/SpoIIIE/SftA family.</text>
</comment>